<gene>
    <name evidence="1" type="primary">astA</name>
    <name type="ordered locus">SeAg_B1869</name>
</gene>
<comment type="function">
    <text evidence="1">Catalyzes the transfer of succinyl-CoA to arginine to produce N(2)-succinylarginine.</text>
</comment>
<comment type="catalytic activity">
    <reaction evidence="1">
        <text>succinyl-CoA + L-arginine = N(2)-succinyl-L-arginine + CoA + H(+)</text>
        <dbReference type="Rhea" id="RHEA:15185"/>
        <dbReference type="ChEBI" id="CHEBI:15378"/>
        <dbReference type="ChEBI" id="CHEBI:32682"/>
        <dbReference type="ChEBI" id="CHEBI:57287"/>
        <dbReference type="ChEBI" id="CHEBI:57292"/>
        <dbReference type="ChEBI" id="CHEBI:58241"/>
        <dbReference type="EC" id="2.3.1.109"/>
    </reaction>
</comment>
<comment type="pathway">
    <text evidence="1">Amino-acid degradation; L-arginine degradation via AST pathway; L-glutamate and succinate from L-arginine: step 1/5.</text>
</comment>
<comment type="similarity">
    <text evidence="1">Belongs to the arginine N-succinyltransferase family.</text>
</comment>
<proteinExistence type="inferred from homology"/>
<protein>
    <recommendedName>
        <fullName evidence="1">Arginine N-succinyltransferase</fullName>
        <shortName evidence="1">AST</shortName>
        <ecNumber evidence="1">2.3.1.109</ecNumber>
    </recommendedName>
    <alternativeName>
        <fullName evidence="1">AOST</fullName>
    </alternativeName>
</protein>
<dbReference type="EC" id="2.3.1.109" evidence="1"/>
<dbReference type="EMBL" id="CP001138">
    <property type="protein sequence ID" value="ACH52941.1"/>
    <property type="molecule type" value="Genomic_DNA"/>
</dbReference>
<dbReference type="RefSeq" id="WP_001263885.1">
    <property type="nucleotide sequence ID" value="NC_011149.1"/>
</dbReference>
<dbReference type="SMR" id="B5F845"/>
<dbReference type="KEGG" id="sea:SeAg_B1869"/>
<dbReference type="HOGENOM" id="CLU_057655_0_0_6"/>
<dbReference type="UniPathway" id="UPA00185">
    <property type="reaction ID" value="UER00279"/>
</dbReference>
<dbReference type="Proteomes" id="UP000008819">
    <property type="component" value="Chromosome"/>
</dbReference>
<dbReference type="GO" id="GO:0008791">
    <property type="term" value="F:arginine N-succinyltransferase activity"/>
    <property type="evidence" value="ECO:0007669"/>
    <property type="project" value="UniProtKB-UniRule"/>
</dbReference>
<dbReference type="GO" id="GO:0019544">
    <property type="term" value="P:arginine catabolic process to glutamate"/>
    <property type="evidence" value="ECO:0007669"/>
    <property type="project" value="UniProtKB-UniRule"/>
</dbReference>
<dbReference type="GO" id="GO:0019545">
    <property type="term" value="P:arginine catabolic process to succinate"/>
    <property type="evidence" value="ECO:0007669"/>
    <property type="project" value="UniProtKB-UniRule"/>
</dbReference>
<dbReference type="Gene3D" id="2.40.40.20">
    <property type="match status" value="1"/>
</dbReference>
<dbReference type="Gene3D" id="3.40.630.30">
    <property type="match status" value="1"/>
</dbReference>
<dbReference type="HAMAP" id="MF_01171">
    <property type="entry name" value="AstA"/>
    <property type="match status" value="1"/>
</dbReference>
<dbReference type="InterPro" id="IPR016181">
    <property type="entry name" value="Acyl_CoA_acyltransferase"/>
</dbReference>
<dbReference type="InterPro" id="IPR007041">
    <property type="entry name" value="Arg_succinylTrfase_AstA/AruG"/>
</dbReference>
<dbReference type="InterPro" id="IPR017650">
    <property type="entry name" value="Arginine_N-succinylTrfase"/>
</dbReference>
<dbReference type="NCBIfam" id="TIGR03243">
    <property type="entry name" value="arg_catab_AOST"/>
    <property type="match status" value="1"/>
</dbReference>
<dbReference type="NCBIfam" id="TIGR03244">
    <property type="entry name" value="arg_catab_AstA"/>
    <property type="match status" value="1"/>
</dbReference>
<dbReference type="NCBIfam" id="NF007770">
    <property type="entry name" value="PRK10456.1"/>
    <property type="match status" value="1"/>
</dbReference>
<dbReference type="PANTHER" id="PTHR30420:SF1">
    <property type="entry name" value="ARGININE N-SUCCINYLTRANSFERASE"/>
    <property type="match status" value="1"/>
</dbReference>
<dbReference type="PANTHER" id="PTHR30420">
    <property type="entry name" value="N-SUCCINYLARGININE DIHYDROLASE"/>
    <property type="match status" value="1"/>
</dbReference>
<dbReference type="Pfam" id="PF04958">
    <property type="entry name" value="AstA"/>
    <property type="match status" value="1"/>
</dbReference>
<dbReference type="SUPFAM" id="SSF55729">
    <property type="entry name" value="Acyl-CoA N-acyltransferases (Nat)"/>
    <property type="match status" value="1"/>
</dbReference>
<feature type="chain" id="PRO_1000137984" description="Arginine N-succinyltransferase">
    <location>
        <begin position="1"/>
        <end position="344"/>
    </location>
</feature>
<feature type="active site" description="Proton donor" evidence="1">
    <location>
        <position position="229"/>
    </location>
</feature>
<feature type="binding site" evidence="1">
    <location>
        <position position="125"/>
    </location>
    <ligand>
        <name>succinyl-CoA</name>
        <dbReference type="ChEBI" id="CHEBI:57292"/>
    </ligand>
</feature>
<evidence type="ECO:0000255" key="1">
    <source>
        <dbReference type="HAMAP-Rule" id="MF_01171"/>
    </source>
</evidence>
<organism>
    <name type="scientific">Salmonella agona (strain SL483)</name>
    <dbReference type="NCBI Taxonomy" id="454166"/>
    <lineage>
        <taxon>Bacteria</taxon>
        <taxon>Pseudomonadati</taxon>
        <taxon>Pseudomonadota</taxon>
        <taxon>Gammaproteobacteria</taxon>
        <taxon>Enterobacterales</taxon>
        <taxon>Enterobacteriaceae</taxon>
        <taxon>Salmonella</taxon>
    </lineage>
</organism>
<accession>B5F845</accession>
<keyword id="KW-0012">Acyltransferase</keyword>
<keyword id="KW-0056">Arginine metabolism</keyword>
<keyword id="KW-0808">Transferase</keyword>
<reference key="1">
    <citation type="journal article" date="2011" name="J. Bacteriol.">
        <title>Comparative genomics of 28 Salmonella enterica isolates: evidence for CRISPR-mediated adaptive sublineage evolution.</title>
        <authorList>
            <person name="Fricke W.F."/>
            <person name="Mammel M.K."/>
            <person name="McDermott P.F."/>
            <person name="Tartera C."/>
            <person name="White D.G."/>
            <person name="Leclerc J.E."/>
            <person name="Ravel J."/>
            <person name="Cebula T.A."/>
        </authorList>
    </citation>
    <scope>NUCLEOTIDE SEQUENCE [LARGE SCALE GENOMIC DNA]</scope>
    <source>
        <strain>SL483</strain>
    </source>
</reference>
<sequence>MRVIRPVEHADIAALMQLAGKTGGGLTSLPANEATLAARIERALKTWSDELPKGEQGYVFVLEDSETGEVGGICAIEVAVGLNDPWYNYRVGTLVHASKELNVYNALPTLFLSNDHTGSSELCTLFLDPEWRKEGNGYLLSKSRFMFMAAFRDKFNEKVVAEMRGVIDEHGYSPFWQSLGKRFFSMDFSRADFLCGTGQKAFIAELMPKHPIYTHFLSEEAQAVIGEVHPQTAPARAVLEKEGFRYRHYIDIFDGGPTLECDIDRVRAIRKSRLVEVAEGQPAPGDYPACLVANENYHHFRAALVRADPQTSRLVLTAAQLDALKCRAGDHVRLVRLCAEEKTV</sequence>
<name>ASTA_SALA4</name>